<accession>P72731</accession>
<evidence type="ECO:0000305" key="1"/>
<organism>
    <name type="scientific">Synechocystis sp. (strain ATCC 27184 / PCC 6803 / Kazusa)</name>
    <dbReference type="NCBI Taxonomy" id="1111708"/>
    <lineage>
        <taxon>Bacteria</taxon>
        <taxon>Bacillati</taxon>
        <taxon>Cyanobacteriota</taxon>
        <taxon>Cyanophyceae</taxon>
        <taxon>Synechococcales</taxon>
        <taxon>Merismopediaceae</taxon>
        <taxon>Synechocystis</taxon>
    </lineage>
</organism>
<dbReference type="EMBL" id="BA000022">
    <property type="protein sequence ID" value="BAA16746.1"/>
    <property type="molecule type" value="Genomic_DNA"/>
</dbReference>
<dbReference type="PIR" id="S74594">
    <property type="entry name" value="S74594"/>
</dbReference>
<dbReference type="SMR" id="P72731"/>
<dbReference type="FunCoup" id="P72731">
    <property type="interactions" value="352"/>
</dbReference>
<dbReference type="IntAct" id="P72731">
    <property type="interactions" value="4"/>
</dbReference>
<dbReference type="STRING" id="1148.gene:10497601"/>
<dbReference type="PaxDb" id="1148-1651819"/>
<dbReference type="EnsemblBacteria" id="BAA16746">
    <property type="protein sequence ID" value="BAA16746"/>
    <property type="gene ID" value="BAA16746"/>
</dbReference>
<dbReference type="KEGG" id="syn:slr1417"/>
<dbReference type="eggNOG" id="COG0316">
    <property type="taxonomic scope" value="Bacteria"/>
</dbReference>
<dbReference type="InParanoid" id="P72731"/>
<dbReference type="PhylomeDB" id="P72731"/>
<dbReference type="Proteomes" id="UP000001425">
    <property type="component" value="Chromosome"/>
</dbReference>
<dbReference type="GO" id="GO:0005737">
    <property type="term" value="C:cytoplasm"/>
    <property type="evidence" value="ECO:0000318"/>
    <property type="project" value="GO_Central"/>
</dbReference>
<dbReference type="GO" id="GO:0051537">
    <property type="term" value="F:2 iron, 2 sulfur cluster binding"/>
    <property type="evidence" value="ECO:0000314"/>
    <property type="project" value="UniProtKB"/>
</dbReference>
<dbReference type="GO" id="GO:0042802">
    <property type="term" value="F:identical protein binding"/>
    <property type="evidence" value="ECO:0000314"/>
    <property type="project" value="UniProtKB"/>
</dbReference>
<dbReference type="GO" id="GO:0005506">
    <property type="term" value="F:iron ion binding"/>
    <property type="evidence" value="ECO:0000314"/>
    <property type="project" value="UniProtKB"/>
</dbReference>
<dbReference type="GO" id="GO:0016226">
    <property type="term" value="P:iron-sulfur cluster assembly"/>
    <property type="evidence" value="ECO:0000318"/>
    <property type="project" value="GO_Central"/>
</dbReference>
<dbReference type="FunFam" id="2.60.300.12:FF:000008">
    <property type="entry name" value="iron-sulfur assembly protein IscA, chloroplastic"/>
    <property type="match status" value="1"/>
</dbReference>
<dbReference type="Gene3D" id="2.60.300.12">
    <property type="entry name" value="HesB-like domain"/>
    <property type="match status" value="1"/>
</dbReference>
<dbReference type="InterPro" id="IPR000361">
    <property type="entry name" value="FeS_biogenesis"/>
</dbReference>
<dbReference type="InterPro" id="IPR016092">
    <property type="entry name" value="FeS_cluster_insertion"/>
</dbReference>
<dbReference type="InterPro" id="IPR017870">
    <property type="entry name" value="FeS_cluster_insertion_CS"/>
</dbReference>
<dbReference type="InterPro" id="IPR035903">
    <property type="entry name" value="HesB-like_dom_sf"/>
</dbReference>
<dbReference type="InterPro" id="IPR031108">
    <property type="entry name" value="ISCA_plant_cyanobact"/>
</dbReference>
<dbReference type="NCBIfam" id="TIGR00049">
    <property type="entry name" value="iron-sulfur cluster assembly accessory protein"/>
    <property type="match status" value="1"/>
</dbReference>
<dbReference type="PANTHER" id="PTHR47265">
    <property type="entry name" value="IRON-SULFUR ASSEMBLY PROTEIN ISCA, CHLOROPLASTIC"/>
    <property type="match status" value="1"/>
</dbReference>
<dbReference type="PANTHER" id="PTHR47265:SF1">
    <property type="entry name" value="IRON-SULFUR ASSEMBLY PROTEIN ISCA, CHLOROPLASTIC"/>
    <property type="match status" value="1"/>
</dbReference>
<dbReference type="Pfam" id="PF01521">
    <property type="entry name" value="Fe-S_biosyn"/>
    <property type="match status" value="1"/>
</dbReference>
<dbReference type="SUPFAM" id="SSF89360">
    <property type="entry name" value="HesB-like domain"/>
    <property type="match status" value="1"/>
</dbReference>
<dbReference type="PROSITE" id="PS01152">
    <property type="entry name" value="HESB"/>
    <property type="match status" value="1"/>
</dbReference>
<keyword id="KW-1185">Reference proteome</keyword>
<protein>
    <recommendedName>
        <fullName>Uncharacterized protein slr1417</fullName>
    </recommendedName>
</protein>
<reference key="1">
    <citation type="journal article" date="1996" name="DNA Res.">
        <title>Sequence analysis of the genome of the unicellular cyanobacterium Synechocystis sp. strain PCC6803. II. Sequence determination of the entire genome and assignment of potential protein-coding regions.</title>
        <authorList>
            <person name="Kaneko T."/>
            <person name="Sato S."/>
            <person name="Kotani H."/>
            <person name="Tanaka A."/>
            <person name="Asamizu E."/>
            <person name="Nakamura Y."/>
            <person name="Miyajima N."/>
            <person name="Hirosawa M."/>
            <person name="Sugiura M."/>
            <person name="Sasamoto S."/>
            <person name="Kimura T."/>
            <person name="Hosouchi T."/>
            <person name="Matsuno A."/>
            <person name="Muraki A."/>
            <person name="Nakazaki N."/>
            <person name="Naruo K."/>
            <person name="Okumura S."/>
            <person name="Shimpo S."/>
            <person name="Takeuchi C."/>
            <person name="Wada T."/>
            <person name="Watanabe A."/>
            <person name="Yamada M."/>
            <person name="Yasuda M."/>
            <person name="Tabata S."/>
        </authorList>
    </citation>
    <scope>NUCLEOTIDE SEQUENCE [LARGE SCALE GENOMIC DNA]</scope>
    <source>
        <strain>ATCC 27184 / PCC 6803 / Kazusa</strain>
    </source>
</reference>
<name>Y1417_SYNY3</name>
<proteinExistence type="inferred from homology"/>
<sequence>MSQATATQAKGIQLSDAALKHLLALKEQQGKDLCLRVGVRQGGCSGMSYMMDFEEPNRATEHDEVFDYEGFQIICDRKSLLYLYGLMLDYSNALIGGGFQFTNPNANQTCGCGKSFGV</sequence>
<gene>
    <name type="ordered locus">slr1417</name>
</gene>
<feature type="chain" id="PRO_0000077022" description="Uncharacterized protein slr1417">
    <location>
        <begin position="1"/>
        <end position="118"/>
    </location>
</feature>
<comment type="similarity">
    <text evidence="1">Belongs to the HesB/IscA family. Ycf83 subfamily.</text>
</comment>